<keyword id="KW-0028">Amino-acid biosynthesis</keyword>
<keyword id="KW-0055">Arginine biosynthesis</keyword>
<keyword id="KW-0067">ATP-binding</keyword>
<keyword id="KW-0963">Cytoplasm</keyword>
<keyword id="KW-0436">Ligase</keyword>
<keyword id="KW-0547">Nucleotide-binding</keyword>
<name>ASSY_SHEPC</name>
<reference key="1">
    <citation type="submission" date="2007-04" db="EMBL/GenBank/DDBJ databases">
        <title>Complete sequence of Shewanella putrefaciens CN-32.</title>
        <authorList>
            <consortium name="US DOE Joint Genome Institute"/>
            <person name="Copeland A."/>
            <person name="Lucas S."/>
            <person name="Lapidus A."/>
            <person name="Barry K."/>
            <person name="Detter J.C."/>
            <person name="Glavina del Rio T."/>
            <person name="Hammon N."/>
            <person name="Israni S."/>
            <person name="Dalin E."/>
            <person name="Tice H."/>
            <person name="Pitluck S."/>
            <person name="Chain P."/>
            <person name="Malfatti S."/>
            <person name="Shin M."/>
            <person name="Vergez L."/>
            <person name="Schmutz J."/>
            <person name="Larimer F."/>
            <person name="Land M."/>
            <person name="Hauser L."/>
            <person name="Kyrpides N."/>
            <person name="Mikhailova N."/>
            <person name="Romine M.F."/>
            <person name="Fredrickson J."/>
            <person name="Tiedje J."/>
            <person name="Richardson P."/>
        </authorList>
    </citation>
    <scope>NUCLEOTIDE SEQUENCE [LARGE SCALE GENOMIC DNA]</scope>
    <source>
        <strain>CN-32 / ATCC BAA-453</strain>
    </source>
</reference>
<organism>
    <name type="scientific">Shewanella putrefaciens (strain CN-32 / ATCC BAA-453)</name>
    <dbReference type="NCBI Taxonomy" id="319224"/>
    <lineage>
        <taxon>Bacteria</taxon>
        <taxon>Pseudomonadati</taxon>
        <taxon>Pseudomonadota</taxon>
        <taxon>Gammaproteobacteria</taxon>
        <taxon>Alteromonadales</taxon>
        <taxon>Shewanellaceae</taxon>
        <taxon>Shewanella</taxon>
    </lineage>
</organism>
<evidence type="ECO:0000255" key="1">
    <source>
        <dbReference type="HAMAP-Rule" id="MF_00005"/>
    </source>
</evidence>
<gene>
    <name evidence="1" type="primary">argG</name>
    <name type="ordered locus">Sputcn32_3714</name>
</gene>
<dbReference type="EC" id="6.3.4.5" evidence="1"/>
<dbReference type="EMBL" id="CP000681">
    <property type="protein sequence ID" value="ABP77422.1"/>
    <property type="molecule type" value="Genomic_DNA"/>
</dbReference>
<dbReference type="SMR" id="A4YBT9"/>
<dbReference type="STRING" id="319224.Sputcn32_3714"/>
<dbReference type="KEGG" id="spc:Sputcn32_3714"/>
<dbReference type="eggNOG" id="COG0137">
    <property type="taxonomic scope" value="Bacteria"/>
</dbReference>
<dbReference type="HOGENOM" id="CLU_032784_4_2_6"/>
<dbReference type="UniPathway" id="UPA00068">
    <property type="reaction ID" value="UER00113"/>
</dbReference>
<dbReference type="GO" id="GO:0005737">
    <property type="term" value="C:cytoplasm"/>
    <property type="evidence" value="ECO:0007669"/>
    <property type="project" value="UniProtKB-SubCell"/>
</dbReference>
<dbReference type="GO" id="GO:0004055">
    <property type="term" value="F:argininosuccinate synthase activity"/>
    <property type="evidence" value="ECO:0007669"/>
    <property type="project" value="UniProtKB-UniRule"/>
</dbReference>
<dbReference type="GO" id="GO:0005524">
    <property type="term" value="F:ATP binding"/>
    <property type="evidence" value="ECO:0007669"/>
    <property type="project" value="UniProtKB-UniRule"/>
</dbReference>
<dbReference type="GO" id="GO:0000053">
    <property type="term" value="P:argininosuccinate metabolic process"/>
    <property type="evidence" value="ECO:0007669"/>
    <property type="project" value="TreeGrafter"/>
</dbReference>
<dbReference type="GO" id="GO:0006526">
    <property type="term" value="P:L-arginine biosynthetic process"/>
    <property type="evidence" value="ECO:0007669"/>
    <property type="project" value="UniProtKB-UniRule"/>
</dbReference>
<dbReference type="GO" id="GO:0000050">
    <property type="term" value="P:urea cycle"/>
    <property type="evidence" value="ECO:0007669"/>
    <property type="project" value="TreeGrafter"/>
</dbReference>
<dbReference type="CDD" id="cd01999">
    <property type="entry name" value="ASS"/>
    <property type="match status" value="1"/>
</dbReference>
<dbReference type="FunFam" id="1.20.5.470:FF:000005">
    <property type="entry name" value="Argininosuccinate synthase"/>
    <property type="match status" value="1"/>
</dbReference>
<dbReference type="FunFam" id="3.40.50.620:FF:000019">
    <property type="entry name" value="Argininosuccinate synthase"/>
    <property type="match status" value="1"/>
</dbReference>
<dbReference type="FunFam" id="3.90.1260.10:FF:000007">
    <property type="entry name" value="Argininosuccinate synthase"/>
    <property type="match status" value="1"/>
</dbReference>
<dbReference type="Gene3D" id="3.90.1260.10">
    <property type="entry name" value="Argininosuccinate synthetase, chain A, domain 2"/>
    <property type="match status" value="1"/>
</dbReference>
<dbReference type="Gene3D" id="3.40.50.620">
    <property type="entry name" value="HUPs"/>
    <property type="match status" value="1"/>
</dbReference>
<dbReference type="Gene3D" id="1.20.5.470">
    <property type="entry name" value="Single helix bin"/>
    <property type="match status" value="1"/>
</dbReference>
<dbReference type="HAMAP" id="MF_00005">
    <property type="entry name" value="Arg_succ_synth_type1"/>
    <property type="match status" value="1"/>
</dbReference>
<dbReference type="InterPro" id="IPR048268">
    <property type="entry name" value="Arginosuc_syn_C"/>
</dbReference>
<dbReference type="InterPro" id="IPR048267">
    <property type="entry name" value="Arginosuc_syn_N"/>
</dbReference>
<dbReference type="InterPro" id="IPR001518">
    <property type="entry name" value="Arginosuc_synth"/>
</dbReference>
<dbReference type="InterPro" id="IPR018223">
    <property type="entry name" value="Arginosuc_synth_CS"/>
</dbReference>
<dbReference type="InterPro" id="IPR023434">
    <property type="entry name" value="Arginosuc_synth_type_1_subfam"/>
</dbReference>
<dbReference type="InterPro" id="IPR024074">
    <property type="entry name" value="AS_cat/multimer_dom_body"/>
</dbReference>
<dbReference type="InterPro" id="IPR014729">
    <property type="entry name" value="Rossmann-like_a/b/a_fold"/>
</dbReference>
<dbReference type="NCBIfam" id="TIGR00032">
    <property type="entry name" value="argG"/>
    <property type="match status" value="1"/>
</dbReference>
<dbReference type="NCBIfam" id="NF001770">
    <property type="entry name" value="PRK00509.1"/>
    <property type="match status" value="1"/>
</dbReference>
<dbReference type="PANTHER" id="PTHR11587">
    <property type="entry name" value="ARGININOSUCCINATE SYNTHASE"/>
    <property type="match status" value="1"/>
</dbReference>
<dbReference type="PANTHER" id="PTHR11587:SF2">
    <property type="entry name" value="ARGININOSUCCINATE SYNTHASE"/>
    <property type="match status" value="1"/>
</dbReference>
<dbReference type="Pfam" id="PF20979">
    <property type="entry name" value="Arginosuc_syn_C"/>
    <property type="match status" value="1"/>
</dbReference>
<dbReference type="Pfam" id="PF00764">
    <property type="entry name" value="Arginosuc_synth"/>
    <property type="match status" value="1"/>
</dbReference>
<dbReference type="SUPFAM" id="SSF52402">
    <property type="entry name" value="Adenine nucleotide alpha hydrolases-like"/>
    <property type="match status" value="1"/>
</dbReference>
<dbReference type="SUPFAM" id="SSF69864">
    <property type="entry name" value="Argininosuccinate synthetase, C-terminal domain"/>
    <property type="match status" value="1"/>
</dbReference>
<dbReference type="PROSITE" id="PS00564">
    <property type="entry name" value="ARGININOSUCCIN_SYN_1"/>
    <property type="match status" value="1"/>
</dbReference>
<dbReference type="PROSITE" id="PS00565">
    <property type="entry name" value="ARGININOSUCCIN_SYN_2"/>
    <property type="match status" value="1"/>
</dbReference>
<feature type="chain" id="PRO_1000000434" description="Argininosuccinate synthase">
    <location>
        <begin position="1"/>
        <end position="407"/>
    </location>
</feature>
<feature type="binding site" evidence="1">
    <location>
        <begin position="16"/>
        <end position="24"/>
    </location>
    <ligand>
        <name>ATP</name>
        <dbReference type="ChEBI" id="CHEBI:30616"/>
    </ligand>
</feature>
<feature type="binding site" evidence="1">
    <location>
        <position position="44"/>
    </location>
    <ligand>
        <name>ATP</name>
        <dbReference type="ChEBI" id="CHEBI:30616"/>
    </ligand>
</feature>
<feature type="binding site" evidence="1">
    <location>
        <position position="96"/>
    </location>
    <ligand>
        <name>L-citrulline</name>
        <dbReference type="ChEBI" id="CHEBI:57743"/>
    </ligand>
</feature>
<feature type="binding site" evidence="1">
    <location>
        <position position="101"/>
    </location>
    <ligand>
        <name>L-citrulline</name>
        <dbReference type="ChEBI" id="CHEBI:57743"/>
    </ligand>
</feature>
<feature type="binding site" evidence="1">
    <location>
        <position position="126"/>
    </location>
    <ligand>
        <name>ATP</name>
        <dbReference type="ChEBI" id="CHEBI:30616"/>
    </ligand>
</feature>
<feature type="binding site" evidence="1">
    <location>
        <position position="128"/>
    </location>
    <ligand>
        <name>L-aspartate</name>
        <dbReference type="ChEBI" id="CHEBI:29991"/>
    </ligand>
</feature>
<feature type="binding site" evidence="1">
    <location>
        <position position="132"/>
    </location>
    <ligand>
        <name>L-aspartate</name>
        <dbReference type="ChEBI" id="CHEBI:29991"/>
    </ligand>
</feature>
<feature type="binding site" evidence="1">
    <location>
        <position position="132"/>
    </location>
    <ligand>
        <name>L-citrulline</name>
        <dbReference type="ChEBI" id="CHEBI:57743"/>
    </ligand>
</feature>
<feature type="binding site" evidence="1">
    <location>
        <position position="133"/>
    </location>
    <ligand>
        <name>L-aspartate</name>
        <dbReference type="ChEBI" id="CHEBI:29991"/>
    </ligand>
</feature>
<feature type="binding site" evidence="1">
    <location>
        <position position="136"/>
    </location>
    <ligand>
        <name>L-citrulline</name>
        <dbReference type="ChEBI" id="CHEBI:57743"/>
    </ligand>
</feature>
<feature type="binding site" evidence="1">
    <location>
        <position position="185"/>
    </location>
    <ligand>
        <name>L-citrulline</name>
        <dbReference type="ChEBI" id="CHEBI:57743"/>
    </ligand>
</feature>
<feature type="binding site" evidence="1">
    <location>
        <position position="194"/>
    </location>
    <ligand>
        <name>L-citrulline</name>
        <dbReference type="ChEBI" id="CHEBI:57743"/>
    </ligand>
</feature>
<feature type="binding site" evidence="1">
    <location>
        <position position="270"/>
    </location>
    <ligand>
        <name>L-citrulline</name>
        <dbReference type="ChEBI" id="CHEBI:57743"/>
    </ligand>
</feature>
<feature type="binding site" evidence="1">
    <location>
        <position position="282"/>
    </location>
    <ligand>
        <name>L-citrulline</name>
        <dbReference type="ChEBI" id="CHEBI:57743"/>
    </ligand>
</feature>
<comment type="catalytic activity">
    <reaction evidence="1">
        <text>L-citrulline + L-aspartate + ATP = 2-(N(omega)-L-arginino)succinate + AMP + diphosphate + H(+)</text>
        <dbReference type="Rhea" id="RHEA:10932"/>
        <dbReference type="ChEBI" id="CHEBI:15378"/>
        <dbReference type="ChEBI" id="CHEBI:29991"/>
        <dbReference type="ChEBI" id="CHEBI:30616"/>
        <dbReference type="ChEBI" id="CHEBI:33019"/>
        <dbReference type="ChEBI" id="CHEBI:57472"/>
        <dbReference type="ChEBI" id="CHEBI:57743"/>
        <dbReference type="ChEBI" id="CHEBI:456215"/>
        <dbReference type="EC" id="6.3.4.5"/>
    </reaction>
</comment>
<comment type="pathway">
    <text evidence="1">Amino-acid biosynthesis; L-arginine biosynthesis; L-arginine from L-ornithine and carbamoyl phosphate: step 2/3.</text>
</comment>
<comment type="subunit">
    <text evidence="1">Homotetramer.</text>
</comment>
<comment type="subcellular location">
    <subcellularLocation>
        <location evidence="1">Cytoplasm</location>
    </subcellularLocation>
</comment>
<comment type="similarity">
    <text evidence="1">Belongs to the argininosuccinate synthase family. Type 1 subfamily.</text>
</comment>
<sequence>MSIENKNTGVKKVVLAYSGGLDTSAIIPWLKENYDNCEIIAFCADVGQGEEELVGLTEKALASGASECHIVDLKEEFVKDYIYPTMATGAIYEGTYLLGTSMARPIIAKAQVEVARKVGADALCHGCTGKGNDQVRFEGCFAALAPDLKVIAPWREWTMQSREDLLDYLAERNIKTSASATKIYSRDANAFHISHEGGELEDPWNEPSKGVWTLTADPEDAPNQPEYVSLEVENGRVTKVNGEALTPYAALMKLNAIAAPHGVGRIDITENRLVGMKSRGCYETPGGTVMFAALRAIEELVLDKTSRTWREQVGAQMAHLVYDGRWFTPLCKSLLAASESLAESVNGEVVVKLYKGHAIAVKKRSPNSLYSEAFATFGEDQVYDQKHAEGFIRLYSLASRIRALNAK</sequence>
<proteinExistence type="inferred from homology"/>
<accession>A4YBT9</accession>
<protein>
    <recommendedName>
        <fullName evidence="1">Argininosuccinate synthase</fullName>
        <ecNumber evidence="1">6.3.4.5</ecNumber>
    </recommendedName>
    <alternativeName>
        <fullName evidence="1">Citrulline--aspartate ligase</fullName>
    </alternativeName>
</protein>